<comment type="function">
    <text evidence="1">Molecular chaperone. Has ATPase activity.</text>
</comment>
<comment type="subunit">
    <text evidence="1">Homodimer.</text>
</comment>
<comment type="subcellular location">
    <subcellularLocation>
        <location evidence="1">Cytoplasm</location>
    </subcellularLocation>
</comment>
<comment type="similarity">
    <text evidence="1">Belongs to the heat shock protein 90 family.</text>
</comment>
<proteinExistence type="inferred from homology"/>
<evidence type="ECO:0000255" key="1">
    <source>
        <dbReference type="HAMAP-Rule" id="MF_00505"/>
    </source>
</evidence>
<keyword id="KW-0067">ATP-binding</keyword>
<keyword id="KW-0143">Chaperone</keyword>
<keyword id="KW-0963">Cytoplasm</keyword>
<keyword id="KW-0547">Nucleotide-binding</keyword>
<keyword id="KW-1185">Reference proteome</keyword>
<keyword id="KW-0346">Stress response</keyword>
<organism>
    <name type="scientific">Halorhodospira halophila (strain DSM 244 / SL1)</name>
    <name type="common">Ectothiorhodospira halophila (strain DSM 244 / SL1)</name>
    <dbReference type="NCBI Taxonomy" id="349124"/>
    <lineage>
        <taxon>Bacteria</taxon>
        <taxon>Pseudomonadati</taxon>
        <taxon>Pseudomonadota</taxon>
        <taxon>Gammaproteobacteria</taxon>
        <taxon>Chromatiales</taxon>
        <taxon>Ectothiorhodospiraceae</taxon>
        <taxon>Halorhodospira</taxon>
    </lineage>
</organism>
<accession>A1WXE4</accession>
<reference key="1">
    <citation type="submission" date="2006-12" db="EMBL/GenBank/DDBJ databases">
        <title>Complete sequence of Halorhodospira halophila SL1.</title>
        <authorList>
            <consortium name="US DOE Joint Genome Institute"/>
            <person name="Copeland A."/>
            <person name="Lucas S."/>
            <person name="Lapidus A."/>
            <person name="Barry K."/>
            <person name="Detter J.C."/>
            <person name="Glavina del Rio T."/>
            <person name="Hammon N."/>
            <person name="Israni S."/>
            <person name="Dalin E."/>
            <person name="Tice H."/>
            <person name="Pitluck S."/>
            <person name="Saunders E."/>
            <person name="Brettin T."/>
            <person name="Bruce D."/>
            <person name="Han C."/>
            <person name="Tapia R."/>
            <person name="Schmutz J."/>
            <person name="Larimer F."/>
            <person name="Land M."/>
            <person name="Hauser L."/>
            <person name="Kyrpides N."/>
            <person name="Mikhailova N."/>
            <person name="Hoff W."/>
            <person name="Richardson P."/>
        </authorList>
    </citation>
    <scope>NUCLEOTIDE SEQUENCE [LARGE SCALE GENOMIC DNA]</scope>
    <source>
        <strain>DSM 244 / SL1</strain>
    </source>
</reference>
<sequence>MSADTQSETLEFQAEVQQLLSLMIHSVYSNREVFLRELISNASDAIDKLRFEALQQESLYEDDPELKIRVEADPEARTVTVIDNGIGMSREDVIENLGTIAHSGTRRFLEQLTGDQHKDAQLIGQFGVGFYSAFVVADRVEVYTRKAGAAAAEGVRWSSDGQGAYTVDTVERAERGTAVVLHLPEAQQEFCDDMRLRQIIRKYSDHISVPIEMPVRNADQGDDADSEAEAPQWEIVNRASALWMRPKSEISEEDYQELYKHVAHDFDDPLTWIHNHVEGRQSYVSLLYIPKRPPFDLYEQKPAHGVKLYVRRVFITEDTEHLLPRYLRFVRGVIDSDDLPLNISREMLQHNPMISSLRSASVKRILDRLECMAKNEPEDYATFWQAFGRVFKEGIAEDPGNRERIARLLRFSSTHEEKETPDVSLDDYVARMKDGQEKIYYVTAESFNAARNSPHLEIFRRHGIEVLLLPDPVDEWLVAHLHEYDGKQLASVAKGELDLEALGEEDDKQARQEKEQAYEDLCKRLGETLGERVSEVRVSHRLTDSPACLVVGEYDFGMGMQRLLQAAGHQLPAGQPALEVNPDHSVIERLATESGQRFEDWALTLYEQSLLAEGGQLEDPAAYVRRVNNLLAG</sequence>
<name>HTPG_HALHL</name>
<feature type="chain" id="PRO_1000014923" description="Chaperone protein HtpG">
    <location>
        <begin position="1"/>
        <end position="633"/>
    </location>
</feature>
<feature type="region of interest" description="A; substrate-binding" evidence="1">
    <location>
        <begin position="1"/>
        <end position="345"/>
    </location>
</feature>
<feature type="region of interest" description="B" evidence="1">
    <location>
        <begin position="346"/>
        <end position="562"/>
    </location>
</feature>
<feature type="region of interest" description="C" evidence="1">
    <location>
        <begin position="563"/>
        <end position="633"/>
    </location>
</feature>
<dbReference type="EMBL" id="CP000544">
    <property type="protein sequence ID" value="ABM62356.1"/>
    <property type="molecule type" value="Genomic_DNA"/>
</dbReference>
<dbReference type="RefSeq" id="WP_011814378.1">
    <property type="nucleotide sequence ID" value="NC_008789.1"/>
</dbReference>
<dbReference type="SMR" id="A1WXE4"/>
<dbReference type="STRING" id="349124.Hhal_1592"/>
<dbReference type="KEGG" id="hha:Hhal_1592"/>
<dbReference type="eggNOG" id="COG0326">
    <property type="taxonomic scope" value="Bacteria"/>
</dbReference>
<dbReference type="HOGENOM" id="CLU_006684_3_0_6"/>
<dbReference type="OrthoDB" id="9802640at2"/>
<dbReference type="Proteomes" id="UP000000647">
    <property type="component" value="Chromosome"/>
</dbReference>
<dbReference type="GO" id="GO:0005737">
    <property type="term" value="C:cytoplasm"/>
    <property type="evidence" value="ECO:0007669"/>
    <property type="project" value="UniProtKB-SubCell"/>
</dbReference>
<dbReference type="GO" id="GO:0005524">
    <property type="term" value="F:ATP binding"/>
    <property type="evidence" value="ECO:0007669"/>
    <property type="project" value="UniProtKB-UniRule"/>
</dbReference>
<dbReference type="GO" id="GO:0016887">
    <property type="term" value="F:ATP hydrolysis activity"/>
    <property type="evidence" value="ECO:0007669"/>
    <property type="project" value="InterPro"/>
</dbReference>
<dbReference type="GO" id="GO:0140662">
    <property type="term" value="F:ATP-dependent protein folding chaperone"/>
    <property type="evidence" value="ECO:0007669"/>
    <property type="project" value="InterPro"/>
</dbReference>
<dbReference type="GO" id="GO:0051082">
    <property type="term" value="F:unfolded protein binding"/>
    <property type="evidence" value="ECO:0007669"/>
    <property type="project" value="UniProtKB-UniRule"/>
</dbReference>
<dbReference type="CDD" id="cd16927">
    <property type="entry name" value="HATPase_Hsp90-like"/>
    <property type="match status" value="1"/>
</dbReference>
<dbReference type="FunFam" id="3.30.230.80:FF:000002">
    <property type="entry name" value="Molecular chaperone HtpG"/>
    <property type="match status" value="1"/>
</dbReference>
<dbReference type="FunFam" id="3.30.565.10:FF:000009">
    <property type="entry name" value="Molecular chaperone HtpG"/>
    <property type="match status" value="1"/>
</dbReference>
<dbReference type="Gene3D" id="3.30.230.80">
    <property type="match status" value="1"/>
</dbReference>
<dbReference type="Gene3D" id="3.40.50.11260">
    <property type="match status" value="1"/>
</dbReference>
<dbReference type="Gene3D" id="1.20.120.790">
    <property type="entry name" value="Heat shock protein 90, C-terminal domain"/>
    <property type="match status" value="1"/>
</dbReference>
<dbReference type="Gene3D" id="3.30.565.10">
    <property type="entry name" value="Histidine kinase-like ATPase, C-terminal domain"/>
    <property type="match status" value="1"/>
</dbReference>
<dbReference type="HAMAP" id="MF_00505">
    <property type="entry name" value="HSP90"/>
    <property type="match status" value="1"/>
</dbReference>
<dbReference type="InterPro" id="IPR036890">
    <property type="entry name" value="HATPase_C_sf"/>
</dbReference>
<dbReference type="InterPro" id="IPR019805">
    <property type="entry name" value="Heat_shock_protein_90_CS"/>
</dbReference>
<dbReference type="InterPro" id="IPR037196">
    <property type="entry name" value="HSP90_C"/>
</dbReference>
<dbReference type="InterPro" id="IPR001404">
    <property type="entry name" value="Hsp90_fam"/>
</dbReference>
<dbReference type="InterPro" id="IPR020575">
    <property type="entry name" value="Hsp90_N"/>
</dbReference>
<dbReference type="InterPro" id="IPR020568">
    <property type="entry name" value="Ribosomal_Su5_D2-typ_SF"/>
</dbReference>
<dbReference type="NCBIfam" id="NF003555">
    <property type="entry name" value="PRK05218.1"/>
    <property type="match status" value="1"/>
</dbReference>
<dbReference type="PANTHER" id="PTHR11528">
    <property type="entry name" value="HEAT SHOCK PROTEIN 90 FAMILY MEMBER"/>
    <property type="match status" value="1"/>
</dbReference>
<dbReference type="Pfam" id="PF13589">
    <property type="entry name" value="HATPase_c_3"/>
    <property type="match status" value="1"/>
</dbReference>
<dbReference type="Pfam" id="PF00183">
    <property type="entry name" value="HSP90"/>
    <property type="match status" value="1"/>
</dbReference>
<dbReference type="PIRSF" id="PIRSF002583">
    <property type="entry name" value="Hsp90"/>
    <property type="match status" value="1"/>
</dbReference>
<dbReference type="PRINTS" id="PR00775">
    <property type="entry name" value="HEATSHOCK90"/>
</dbReference>
<dbReference type="SMART" id="SM00387">
    <property type="entry name" value="HATPase_c"/>
    <property type="match status" value="1"/>
</dbReference>
<dbReference type="SUPFAM" id="SSF55874">
    <property type="entry name" value="ATPase domain of HSP90 chaperone/DNA topoisomerase II/histidine kinase"/>
    <property type="match status" value="1"/>
</dbReference>
<dbReference type="SUPFAM" id="SSF110942">
    <property type="entry name" value="HSP90 C-terminal domain"/>
    <property type="match status" value="1"/>
</dbReference>
<dbReference type="SUPFAM" id="SSF54211">
    <property type="entry name" value="Ribosomal protein S5 domain 2-like"/>
    <property type="match status" value="1"/>
</dbReference>
<dbReference type="PROSITE" id="PS00298">
    <property type="entry name" value="HSP90"/>
    <property type="match status" value="1"/>
</dbReference>
<gene>
    <name evidence="1" type="primary">htpG</name>
    <name type="ordered locus">Hhal_1592</name>
</gene>
<protein>
    <recommendedName>
        <fullName evidence="1">Chaperone protein HtpG</fullName>
    </recommendedName>
    <alternativeName>
        <fullName evidence="1">Heat shock protein HtpG</fullName>
    </alternativeName>
    <alternativeName>
        <fullName evidence="1">High temperature protein G</fullName>
    </alternativeName>
</protein>